<proteinExistence type="inferred from homology"/>
<accession>B5BG54</accession>
<evidence type="ECO:0000255" key="1">
    <source>
        <dbReference type="HAMAP-Rule" id="MF_00330"/>
    </source>
</evidence>
<reference key="1">
    <citation type="journal article" date="2009" name="BMC Genomics">
        <title>Pseudogene accumulation in the evolutionary histories of Salmonella enterica serovars Paratyphi A and Typhi.</title>
        <authorList>
            <person name="Holt K.E."/>
            <person name="Thomson N.R."/>
            <person name="Wain J."/>
            <person name="Langridge G.C."/>
            <person name="Hasan R."/>
            <person name="Bhutta Z.A."/>
            <person name="Quail M.A."/>
            <person name="Norbertczak H."/>
            <person name="Walker D."/>
            <person name="Simmonds M."/>
            <person name="White B."/>
            <person name="Bason N."/>
            <person name="Mungall K."/>
            <person name="Dougan G."/>
            <person name="Parkhill J."/>
        </authorList>
    </citation>
    <scope>NUCLEOTIDE SEQUENCE [LARGE SCALE GENOMIC DNA]</scope>
    <source>
        <strain>AKU_12601</strain>
    </source>
</reference>
<keyword id="KW-0997">Cell inner membrane</keyword>
<keyword id="KW-1003">Cell membrane</keyword>
<keyword id="KW-0169">Cobalamin biosynthesis</keyword>
<keyword id="KW-0170">Cobalt</keyword>
<keyword id="KW-0171">Cobalt transport</keyword>
<keyword id="KW-0406">Ion transport</keyword>
<keyword id="KW-0472">Membrane</keyword>
<keyword id="KW-0812">Transmembrane</keyword>
<keyword id="KW-1133">Transmembrane helix</keyword>
<keyword id="KW-0813">Transport</keyword>
<gene>
    <name evidence="1" type="primary">cbiN</name>
    <name type="ordered locus">SSPA0794</name>
</gene>
<feature type="chain" id="PRO_1000116115" description="Cobalt transport protein CbiN">
    <location>
        <begin position="1"/>
        <end position="93"/>
    </location>
</feature>
<feature type="transmembrane region" description="Helical" evidence="1">
    <location>
        <begin position="5"/>
        <end position="25"/>
    </location>
</feature>
<feature type="transmembrane region" description="Helical" evidence="1">
    <location>
        <begin position="63"/>
        <end position="83"/>
    </location>
</feature>
<comment type="function">
    <text evidence="1">Part of the energy-coupling factor (ECF) transporter complex CbiMNOQ involved in cobalt import.</text>
</comment>
<comment type="pathway">
    <text evidence="1">Cofactor biosynthesis; adenosylcobalamin biosynthesis.</text>
</comment>
<comment type="subunit">
    <text evidence="1">Forms an energy-coupling factor (ECF) transporter complex composed of an ATP-binding protein (A component, CbiO), a transmembrane protein (T component, CbiQ) and 2 possible substrate-capture proteins (S components, CbiM and CbiN) of unknown stoichimetry.</text>
</comment>
<comment type="subcellular location">
    <subcellularLocation>
        <location evidence="1">Cell inner membrane</location>
        <topology evidence="1">Multi-pass membrane protein</topology>
    </subcellularLocation>
</comment>
<comment type="similarity">
    <text evidence="1">Belongs to the CbiN family.</text>
</comment>
<organism>
    <name type="scientific">Salmonella paratyphi A (strain AKU_12601)</name>
    <dbReference type="NCBI Taxonomy" id="554290"/>
    <lineage>
        <taxon>Bacteria</taxon>
        <taxon>Pseudomonadati</taxon>
        <taxon>Pseudomonadota</taxon>
        <taxon>Gammaproteobacteria</taxon>
        <taxon>Enterobacterales</taxon>
        <taxon>Enterobacteriaceae</taxon>
        <taxon>Salmonella</taxon>
    </lineage>
</organism>
<dbReference type="EMBL" id="FM200053">
    <property type="protein sequence ID" value="CAR58935.1"/>
    <property type="molecule type" value="Genomic_DNA"/>
</dbReference>
<dbReference type="RefSeq" id="WP_000753216.1">
    <property type="nucleotide sequence ID" value="NC_011147.1"/>
</dbReference>
<dbReference type="KEGG" id="sek:SSPA0794"/>
<dbReference type="HOGENOM" id="CLU_136197_2_0_6"/>
<dbReference type="UniPathway" id="UPA00148"/>
<dbReference type="Proteomes" id="UP000001869">
    <property type="component" value="Chromosome"/>
</dbReference>
<dbReference type="GO" id="GO:0005886">
    <property type="term" value="C:plasma membrane"/>
    <property type="evidence" value="ECO:0007669"/>
    <property type="project" value="UniProtKB-SubCell"/>
</dbReference>
<dbReference type="GO" id="GO:0015087">
    <property type="term" value="F:cobalt ion transmembrane transporter activity"/>
    <property type="evidence" value="ECO:0007669"/>
    <property type="project" value="UniProtKB-UniRule"/>
</dbReference>
<dbReference type="GO" id="GO:0009236">
    <property type="term" value="P:cobalamin biosynthetic process"/>
    <property type="evidence" value="ECO:0007669"/>
    <property type="project" value="UniProtKB-UniRule"/>
</dbReference>
<dbReference type="HAMAP" id="MF_00330">
    <property type="entry name" value="CbiN"/>
    <property type="match status" value="1"/>
</dbReference>
<dbReference type="InterPro" id="IPR003705">
    <property type="entry name" value="CbiN"/>
</dbReference>
<dbReference type="NCBIfam" id="TIGR01165">
    <property type="entry name" value="cbiN"/>
    <property type="match status" value="1"/>
</dbReference>
<dbReference type="NCBIfam" id="NF002780">
    <property type="entry name" value="PRK02898.1"/>
    <property type="match status" value="1"/>
</dbReference>
<dbReference type="PANTHER" id="PTHR38662">
    <property type="entry name" value="COBALT TRANSPORT PROTEIN CBIN"/>
    <property type="match status" value="1"/>
</dbReference>
<dbReference type="PANTHER" id="PTHR38662:SF1">
    <property type="entry name" value="COBALT TRANSPORT PROTEIN CBIN"/>
    <property type="match status" value="1"/>
</dbReference>
<dbReference type="Pfam" id="PF02553">
    <property type="entry name" value="CbiN"/>
    <property type="match status" value="1"/>
</dbReference>
<name>CBIN_SALPK</name>
<protein>
    <recommendedName>
        <fullName evidence="1">Cobalt transport protein CbiN</fullName>
    </recommendedName>
    <alternativeName>
        <fullName evidence="1">Energy-coupling factor transporter probable substrate-capture protein CbiN</fullName>
        <shortName evidence="1">ECF transporter S component CbiN</shortName>
    </alternativeName>
</protein>
<sequence length="93" mass="10269">MKKTLMLLAMVVALVILPFFINHGGEYGGSDGEAESQIQALAPQYKPWFQPLYEPASGEIESLLFTLQGSLGAAVIFYILGYCKGKQRRDDRA</sequence>